<comment type="function">
    <text evidence="1">Transfers and isomerizes the ribose moiety from AdoMet to the 7-aminomethyl group of 7-deazaguanine (preQ1-tRNA) to give epoxyqueuosine (oQ-tRNA).</text>
</comment>
<comment type="catalytic activity">
    <reaction evidence="1">
        <text>7-aminomethyl-7-carbaguanosine(34) in tRNA + S-adenosyl-L-methionine = epoxyqueuosine(34) in tRNA + adenine + L-methionine + 2 H(+)</text>
        <dbReference type="Rhea" id="RHEA:32155"/>
        <dbReference type="Rhea" id="RHEA-COMP:10342"/>
        <dbReference type="Rhea" id="RHEA-COMP:18582"/>
        <dbReference type="ChEBI" id="CHEBI:15378"/>
        <dbReference type="ChEBI" id="CHEBI:16708"/>
        <dbReference type="ChEBI" id="CHEBI:57844"/>
        <dbReference type="ChEBI" id="CHEBI:59789"/>
        <dbReference type="ChEBI" id="CHEBI:82833"/>
        <dbReference type="ChEBI" id="CHEBI:194443"/>
        <dbReference type="EC" id="2.4.99.17"/>
    </reaction>
</comment>
<comment type="pathway">
    <text evidence="1">tRNA modification; tRNA-queuosine biosynthesis.</text>
</comment>
<comment type="subunit">
    <text evidence="1">Monomer.</text>
</comment>
<comment type="subcellular location">
    <subcellularLocation>
        <location evidence="1">Cytoplasm</location>
    </subcellularLocation>
</comment>
<comment type="similarity">
    <text evidence="1">Belongs to the QueA family.</text>
</comment>
<organism>
    <name type="scientific">Prochlorococcus marinus (strain NATL2A)</name>
    <dbReference type="NCBI Taxonomy" id="59920"/>
    <lineage>
        <taxon>Bacteria</taxon>
        <taxon>Bacillati</taxon>
        <taxon>Cyanobacteriota</taxon>
        <taxon>Cyanophyceae</taxon>
        <taxon>Synechococcales</taxon>
        <taxon>Prochlorococcaceae</taxon>
        <taxon>Prochlorococcus</taxon>
    </lineage>
</organism>
<evidence type="ECO:0000255" key="1">
    <source>
        <dbReference type="HAMAP-Rule" id="MF_00113"/>
    </source>
</evidence>
<protein>
    <recommendedName>
        <fullName evidence="1">S-adenosylmethionine:tRNA ribosyltransferase-isomerase</fullName>
        <ecNumber evidence="1">2.4.99.17</ecNumber>
    </recommendedName>
    <alternativeName>
        <fullName evidence="1">Queuosine biosynthesis protein QueA</fullName>
    </alternativeName>
</protein>
<dbReference type="EC" id="2.4.99.17" evidence="1"/>
<dbReference type="EMBL" id="CP000095">
    <property type="protein sequence ID" value="AAZ59228.1"/>
    <property type="molecule type" value="Genomic_DNA"/>
</dbReference>
<dbReference type="RefSeq" id="WP_011294373.1">
    <property type="nucleotide sequence ID" value="NC_007335.2"/>
</dbReference>
<dbReference type="SMR" id="Q46H06"/>
<dbReference type="STRING" id="59920.PMN2A_1740"/>
<dbReference type="KEGG" id="pmn:PMN2A_1740"/>
<dbReference type="HOGENOM" id="CLU_039110_1_0_3"/>
<dbReference type="OrthoDB" id="9805933at2"/>
<dbReference type="PhylomeDB" id="Q46H06"/>
<dbReference type="UniPathway" id="UPA00392"/>
<dbReference type="Proteomes" id="UP000002535">
    <property type="component" value="Chromosome"/>
</dbReference>
<dbReference type="GO" id="GO:0005737">
    <property type="term" value="C:cytoplasm"/>
    <property type="evidence" value="ECO:0007669"/>
    <property type="project" value="UniProtKB-SubCell"/>
</dbReference>
<dbReference type="GO" id="GO:0051075">
    <property type="term" value="F:S-adenosylmethionine:tRNA ribosyltransferase-isomerase activity"/>
    <property type="evidence" value="ECO:0007669"/>
    <property type="project" value="UniProtKB-EC"/>
</dbReference>
<dbReference type="GO" id="GO:0008616">
    <property type="term" value="P:queuosine biosynthetic process"/>
    <property type="evidence" value="ECO:0007669"/>
    <property type="project" value="UniProtKB-UniRule"/>
</dbReference>
<dbReference type="GO" id="GO:0002099">
    <property type="term" value="P:tRNA wobble guanine modification"/>
    <property type="evidence" value="ECO:0007669"/>
    <property type="project" value="TreeGrafter"/>
</dbReference>
<dbReference type="Gene3D" id="2.40.10.240">
    <property type="entry name" value="QueA-like"/>
    <property type="match status" value="1"/>
</dbReference>
<dbReference type="Gene3D" id="3.40.1780.10">
    <property type="entry name" value="QueA-like"/>
    <property type="match status" value="2"/>
</dbReference>
<dbReference type="HAMAP" id="MF_00113">
    <property type="entry name" value="QueA"/>
    <property type="match status" value="1"/>
</dbReference>
<dbReference type="InterPro" id="IPR003699">
    <property type="entry name" value="QueA"/>
</dbReference>
<dbReference type="InterPro" id="IPR042118">
    <property type="entry name" value="QueA_dom1"/>
</dbReference>
<dbReference type="InterPro" id="IPR042119">
    <property type="entry name" value="QueA_dom2"/>
</dbReference>
<dbReference type="InterPro" id="IPR036100">
    <property type="entry name" value="QueA_sf"/>
</dbReference>
<dbReference type="NCBIfam" id="NF001140">
    <property type="entry name" value="PRK00147.1"/>
    <property type="match status" value="1"/>
</dbReference>
<dbReference type="NCBIfam" id="TIGR00113">
    <property type="entry name" value="queA"/>
    <property type="match status" value="1"/>
</dbReference>
<dbReference type="PANTHER" id="PTHR30307">
    <property type="entry name" value="S-ADENOSYLMETHIONINE:TRNA RIBOSYLTRANSFERASE-ISOMERASE"/>
    <property type="match status" value="1"/>
</dbReference>
<dbReference type="PANTHER" id="PTHR30307:SF0">
    <property type="entry name" value="S-ADENOSYLMETHIONINE:TRNA RIBOSYLTRANSFERASE-ISOMERASE"/>
    <property type="match status" value="1"/>
</dbReference>
<dbReference type="Pfam" id="PF02547">
    <property type="entry name" value="Queuosine_synth"/>
    <property type="match status" value="1"/>
</dbReference>
<dbReference type="SUPFAM" id="SSF111337">
    <property type="entry name" value="QueA-like"/>
    <property type="match status" value="1"/>
</dbReference>
<proteinExistence type="inferred from homology"/>
<gene>
    <name evidence="1" type="primary">queA</name>
    <name type="ordered locus">PMN2A_1740</name>
</gene>
<keyword id="KW-0963">Cytoplasm</keyword>
<keyword id="KW-0671">Queuosine biosynthesis</keyword>
<keyword id="KW-1185">Reference proteome</keyword>
<keyword id="KW-0949">S-adenosyl-L-methionine</keyword>
<keyword id="KW-0808">Transferase</keyword>
<sequence length="365" mass="40768">MLDQKDNLLSSYNYDLPNELIAQSPTKSRHDAKLMIVKDGLDDSLNLVHAKVWDIKDILKPADLLVVNNTRVVKARLKIRLSGGGAGELLLMEPRGDGRWLCLGRPARRMRGGDQLWLDMSRDNSLILKVIDKDERTGGRIIQFSNEFTSWTEMENILDLCGEVPLPPYIDKDKSSDHEESYQTRFASKPGAIAAPTAGLHLSDELIENLKTRGIKIAQITLHVGLGTFRPLEKEDLSQLHLHSEWIEVTEETIKAITNCKEDGGKVFAVGTTSVRALEAAYLSGRGALKPYEGKVDLVIKPGFKFSVIDGLLTNFHLPKSSLLLLVSALIGRKRMLKLYKQAISNKYRFFSYGDAMLITPESVI</sequence>
<accession>Q46H06</accession>
<name>QUEA_PROMT</name>
<feature type="chain" id="PRO_0000231357" description="S-adenosylmethionine:tRNA ribosyltransferase-isomerase">
    <location>
        <begin position="1"/>
        <end position="365"/>
    </location>
</feature>
<reference key="1">
    <citation type="journal article" date="2007" name="PLoS Genet.">
        <title>Patterns and implications of gene gain and loss in the evolution of Prochlorococcus.</title>
        <authorList>
            <person name="Kettler G.C."/>
            <person name="Martiny A.C."/>
            <person name="Huang K."/>
            <person name="Zucker J."/>
            <person name="Coleman M.L."/>
            <person name="Rodrigue S."/>
            <person name="Chen F."/>
            <person name="Lapidus A."/>
            <person name="Ferriera S."/>
            <person name="Johnson J."/>
            <person name="Steglich C."/>
            <person name="Church G.M."/>
            <person name="Richardson P."/>
            <person name="Chisholm S.W."/>
        </authorList>
    </citation>
    <scope>NUCLEOTIDE SEQUENCE [LARGE SCALE GENOMIC DNA]</scope>
    <source>
        <strain>NATL2A</strain>
    </source>
</reference>